<organism>
    <name type="scientific">Burkholderia mallei (strain NCTC 10229)</name>
    <dbReference type="NCBI Taxonomy" id="412022"/>
    <lineage>
        <taxon>Bacteria</taxon>
        <taxon>Pseudomonadati</taxon>
        <taxon>Pseudomonadota</taxon>
        <taxon>Betaproteobacteria</taxon>
        <taxon>Burkholderiales</taxon>
        <taxon>Burkholderiaceae</taxon>
        <taxon>Burkholderia</taxon>
        <taxon>pseudomallei group</taxon>
    </lineage>
</organism>
<name>ADC_BURM9</name>
<proteinExistence type="inferred from homology"/>
<evidence type="ECO:0000255" key="1">
    <source>
        <dbReference type="HAMAP-Rule" id="MF_00597"/>
    </source>
</evidence>
<gene>
    <name evidence="1" type="primary">adc</name>
    <name type="ordered locus">BMA10229_1447</name>
</gene>
<dbReference type="EC" id="4.1.1.4" evidence="1"/>
<dbReference type="EMBL" id="CP000545">
    <property type="protein sequence ID" value="ABM99027.2"/>
    <property type="molecule type" value="Genomic_DNA"/>
</dbReference>
<dbReference type="RefSeq" id="WP_004194452.1">
    <property type="nucleotide sequence ID" value="NC_008835.1"/>
</dbReference>
<dbReference type="SMR" id="A2RZY1"/>
<dbReference type="KEGG" id="bml:BMA10229_1447"/>
<dbReference type="HOGENOM" id="CLU_077089_0_0_4"/>
<dbReference type="Proteomes" id="UP000002283">
    <property type="component" value="Chromosome II"/>
</dbReference>
<dbReference type="GO" id="GO:0047602">
    <property type="term" value="F:acetoacetate decarboxylase activity"/>
    <property type="evidence" value="ECO:0007669"/>
    <property type="project" value="UniProtKB-UniRule"/>
</dbReference>
<dbReference type="Gene3D" id="2.40.400.10">
    <property type="entry name" value="Acetoacetate decarboxylase-like"/>
    <property type="match status" value="1"/>
</dbReference>
<dbReference type="HAMAP" id="MF_00597">
    <property type="entry name" value="ADC"/>
    <property type="match status" value="1"/>
</dbReference>
<dbReference type="InterPro" id="IPR010451">
    <property type="entry name" value="Acetoacetate_decarboxylase"/>
</dbReference>
<dbReference type="InterPro" id="IPR023653">
    <property type="entry name" value="Acetoacetate_decarboxylase_bac"/>
</dbReference>
<dbReference type="InterPro" id="IPR023375">
    <property type="entry name" value="ADC_dom_sf"/>
</dbReference>
<dbReference type="NCBIfam" id="NF002614">
    <property type="entry name" value="PRK02265.1"/>
    <property type="match status" value="1"/>
</dbReference>
<dbReference type="Pfam" id="PF06314">
    <property type="entry name" value="ADC"/>
    <property type="match status" value="1"/>
</dbReference>
<dbReference type="SUPFAM" id="SSF160104">
    <property type="entry name" value="Acetoacetate decarboxylase-like"/>
    <property type="match status" value="1"/>
</dbReference>
<reference key="1">
    <citation type="journal article" date="2010" name="Genome Biol. Evol.">
        <title>Continuing evolution of Burkholderia mallei through genome reduction and large-scale rearrangements.</title>
        <authorList>
            <person name="Losada L."/>
            <person name="Ronning C.M."/>
            <person name="DeShazer D."/>
            <person name="Woods D."/>
            <person name="Fedorova N."/>
            <person name="Kim H.S."/>
            <person name="Shabalina S.A."/>
            <person name="Pearson T.R."/>
            <person name="Brinkac L."/>
            <person name="Tan P."/>
            <person name="Nandi T."/>
            <person name="Crabtree J."/>
            <person name="Badger J."/>
            <person name="Beckstrom-Sternberg S."/>
            <person name="Saqib M."/>
            <person name="Schutzer S.E."/>
            <person name="Keim P."/>
            <person name="Nierman W.C."/>
        </authorList>
    </citation>
    <scope>NUCLEOTIDE SEQUENCE [LARGE SCALE GENOMIC DNA]</scope>
    <source>
        <strain>NCTC 10229</strain>
    </source>
</reference>
<protein>
    <recommendedName>
        <fullName evidence="1">Acetoacetate decarboxylase</fullName>
        <shortName evidence="1">AAD</shortName>
        <shortName evidence="1">ADC</shortName>
        <ecNumber evidence="1">4.1.1.4</ecNumber>
    </recommendedName>
</protein>
<feature type="chain" id="PRO_1000025635" description="Acetoacetate decarboxylase">
    <location>
        <begin position="1"/>
        <end position="246"/>
    </location>
</feature>
<feature type="active site" description="Schiff-base intermediate with acetoacetate" evidence="1">
    <location>
        <position position="116"/>
    </location>
</feature>
<comment type="function">
    <text evidence="1">Catalyzes the conversion of acetoacetate to acetone and carbon dioxide.</text>
</comment>
<comment type="catalytic activity">
    <reaction evidence="1">
        <text>acetoacetate + H(+) = acetone + CO2</text>
        <dbReference type="Rhea" id="RHEA:19729"/>
        <dbReference type="ChEBI" id="CHEBI:13705"/>
        <dbReference type="ChEBI" id="CHEBI:15347"/>
        <dbReference type="ChEBI" id="CHEBI:15378"/>
        <dbReference type="ChEBI" id="CHEBI:16526"/>
        <dbReference type="EC" id="4.1.1.4"/>
    </reaction>
</comment>
<comment type="similarity">
    <text evidence="1">Belongs to the ADC family.</text>
</comment>
<accession>A2RZY1</accession>
<accession>A2RZY0</accession>
<keyword id="KW-0210">Decarboxylase</keyword>
<keyword id="KW-0456">Lyase</keyword>
<keyword id="KW-0704">Schiff base</keyword>
<sequence>MKPSQVRSKAFAMPLTSPAFPMGPYRFVNREFLIITYRTDMDRLREIVPEPLEVKEPLVHYEFIRMPDSTGFGDYTESGQVIPVEYKGQPGGYTLAMYLNDHPPIAGGRELWGFPKKLAQPTLQTHIDTLLGTLDYGPVRVATGTMGYKHQELDLEEQAKRLAGANFLLKIIPHVDGSARVCELVRYYLQDIEMKGAWTGPASLQLAPHALAPVADLPVLEIVEARHLLADLTLGLGEVVYDYLAQ</sequence>